<comment type="function">
    <text evidence="1">Protects cells and enzymes from oxidative damage, by catalyzing the reduction of hydrogen peroxide, lipid peroxides and organic hydroperoxide, by glutathione.</text>
</comment>
<comment type="catalytic activity">
    <reaction evidence="2">
        <text>a hydroperoxy polyunsaturated fatty acid + 2 glutathione = a hydroxy polyunsaturated fatty acid + glutathione disulfide + H2O</text>
        <dbReference type="Rhea" id="RHEA:19057"/>
        <dbReference type="ChEBI" id="CHEBI:15377"/>
        <dbReference type="ChEBI" id="CHEBI:57925"/>
        <dbReference type="ChEBI" id="CHEBI:58297"/>
        <dbReference type="ChEBI" id="CHEBI:131871"/>
        <dbReference type="ChEBI" id="CHEBI:134019"/>
        <dbReference type="EC" id="1.11.1.12"/>
    </reaction>
</comment>
<comment type="subcellular location">
    <subcellularLocation>
        <location evidence="3">Cytoplasm</location>
    </subcellularLocation>
</comment>
<comment type="induction">
    <text>By salt stress.</text>
</comment>
<comment type="similarity">
    <text evidence="3">Belongs to the glutathione peroxidase family.</text>
</comment>
<proteinExistence type="evidence at protein level"/>
<dbReference type="EC" id="1.11.1.12"/>
<dbReference type="EMBL" id="X66377">
    <property type="protein sequence ID" value="CAA47018.1"/>
    <property type="molecule type" value="mRNA"/>
</dbReference>
<dbReference type="PIR" id="S33618">
    <property type="entry name" value="S33618"/>
</dbReference>
<dbReference type="SMR" id="Q06652"/>
<dbReference type="PeroxiBase" id="2618">
    <property type="entry name" value="CsGPx06"/>
</dbReference>
<dbReference type="PaxDb" id="2711-XP_006476598.1"/>
<dbReference type="eggNOG" id="KOG1651">
    <property type="taxonomic scope" value="Eukaryota"/>
</dbReference>
<dbReference type="OrthoDB" id="446890at2759"/>
<dbReference type="GO" id="GO:0005737">
    <property type="term" value="C:cytoplasm"/>
    <property type="evidence" value="ECO:0007669"/>
    <property type="project" value="UniProtKB-SubCell"/>
</dbReference>
<dbReference type="GO" id="GO:0047066">
    <property type="term" value="F:phospholipid-hydroperoxide glutathione peroxidase activity"/>
    <property type="evidence" value="ECO:0007669"/>
    <property type="project" value="UniProtKB-EC"/>
</dbReference>
<dbReference type="GO" id="GO:0006979">
    <property type="term" value="P:response to oxidative stress"/>
    <property type="evidence" value="ECO:0007669"/>
    <property type="project" value="InterPro"/>
</dbReference>
<dbReference type="CDD" id="cd00340">
    <property type="entry name" value="GSH_Peroxidase"/>
    <property type="match status" value="1"/>
</dbReference>
<dbReference type="FunFam" id="3.40.30.10:FF:000025">
    <property type="entry name" value="Glutathione peroxidase"/>
    <property type="match status" value="1"/>
</dbReference>
<dbReference type="Gene3D" id="3.40.30.10">
    <property type="entry name" value="Glutaredoxin"/>
    <property type="match status" value="1"/>
</dbReference>
<dbReference type="InterPro" id="IPR000889">
    <property type="entry name" value="Glutathione_peroxidase"/>
</dbReference>
<dbReference type="InterPro" id="IPR029759">
    <property type="entry name" value="GPX_AS"/>
</dbReference>
<dbReference type="InterPro" id="IPR029760">
    <property type="entry name" value="GPX_CS"/>
</dbReference>
<dbReference type="InterPro" id="IPR036249">
    <property type="entry name" value="Thioredoxin-like_sf"/>
</dbReference>
<dbReference type="InterPro" id="IPR013766">
    <property type="entry name" value="Thioredoxin_domain"/>
</dbReference>
<dbReference type="PANTHER" id="PTHR11592">
    <property type="entry name" value="GLUTATHIONE PEROXIDASE"/>
    <property type="match status" value="1"/>
</dbReference>
<dbReference type="PANTHER" id="PTHR11592:SF118">
    <property type="entry name" value="PHOSPHOLIPID HYDROPEROXIDE GLUTATHIONE PEROXIDASE 6, MITOCHONDRIAL-RELATED"/>
    <property type="match status" value="1"/>
</dbReference>
<dbReference type="Pfam" id="PF00255">
    <property type="entry name" value="GSHPx"/>
    <property type="match status" value="1"/>
</dbReference>
<dbReference type="PIRSF" id="PIRSF000303">
    <property type="entry name" value="Glutathion_perox"/>
    <property type="match status" value="1"/>
</dbReference>
<dbReference type="PRINTS" id="PR01011">
    <property type="entry name" value="GLUTPROXDASE"/>
</dbReference>
<dbReference type="SUPFAM" id="SSF52833">
    <property type="entry name" value="Thioredoxin-like"/>
    <property type="match status" value="1"/>
</dbReference>
<dbReference type="PROSITE" id="PS00460">
    <property type="entry name" value="GLUTATHIONE_PEROXID_1"/>
    <property type="match status" value="1"/>
</dbReference>
<dbReference type="PROSITE" id="PS00763">
    <property type="entry name" value="GLUTATHIONE_PEROXID_2"/>
    <property type="match status" value="1"/>
</dbReference>
<dbReference type="PROSITE" id="PS51355">
    <property type="entry name" value="GLUTATHIONE_PEROXID_3"/>
    <property type="match status" value="1"/>
</dbReference>
<reference key="1">
    <citation type="journal article" date="1993" name="Plant Mol. Biol.">
        <title>Molecular characterization of salt-stress-associated protein in citrus: protein and cDNA sequence homology to mammalian glutathione peroxidases.</title>
        <authorList>
            <person name="Holland D."/>
            <person name="Ben-Hayyim G."/>
            <person name="Faltin Z."/>
            <person name="Camoin L."/>
            <person name="Strosberg A.D."/>
            <person name="Eshdat Y."/>
        </authorList>
    </citation>
    <scope>NUCLEOTIDE SEQUENCE [MRNA]</scope>
    <scope>PARTIAL PROTEIN SEQUENCE</scope>
</reference>
<name>GPX4_CITSI</name>
<protein>
    <recommendedName>
        <fullName>Probable phospholipid hydroperoxide glutathione peroxidase</fullName>
        <shortName>PHGPx</shortName>
        <ecNumber>1.11.1.12</ecNumber>
    </recommendedName>
    <alternativeName>
        <fullName>Salt-associated protein</fullName>
    </alternativeName>
</protein>
<evidence type="ECO:0000250" key="1">
    <source>
        <dbReference type="UniProtKB" id="O70325"/>
    </source>
</evidence>
<evidence type="ECO:0000250" key="2">
    <source>
        <dbReference type="UniProtKB" id="P36968"/>
    </source>
</evidence>
<evidence type="ECO:0000305" key="3"/>
<organism>
    <name type="scientific">Citrus sinensis</name>
    <name type="common">Sweet orange</name>
    <name type="synonym">Citrus aurantium var. sinensis</name>
    <dbReference type="NCBI Taxonomy" id="2711"/>
    <lineage>
        <taxon>Eukaryota</taxon>
        <taxon>Viridiplantae</taxon>
        <taxon>Streptophyta</taxon>
        <taxon>Embryophyta</taxon>
        <taxon>Tracheophyta</taxon>
        <taxon>Spermatophyta</taxon>
        <taxon>Magnoliopsida</taxon>
        <taxon>eudicotyledons</taxon>
        <taxon>Gunneridae</taxon>
        <taxon>Pentapetalae</taxon>
        <taxon>rosids</taxon>
        <taxon>malvids</taxon>
        <taxon>Sapindales</taxon>
        <taxon>Rutaceae</taxon>
        <taxon>Aurantioideae</taxon>
        <taxon>Citrus</taxon>
    </lineage>
</organism>
<sequence>MASQSKTSVHDFTVKDAKGQDVDLSIYKGKLLLIVNVASQCGLTNSNYTELSQLYDKYKNQGLEILAFPCNQFGAQEPGDNEQIQEFACTRFKAEFPIFDKVDVNGDNAAPLYKHLKSSKGGLFGDSIKWNFSKFLVDKEGNVVERYAPTTSPLSIEKDIKKLLETA</sequence>
<keyword id="KW-0963">Cytoplasm</keyword>
<keyword id="KW-0903">Direct protein sequencing</keyword>
<keyword id="KW-0560">Oxidoreductase</keyword>
<keyword id="KW-0575">Peroxidase</keyword>
<keyword id="KW-0346">Stress response</keyword>
<gene>
    <name type="primary">CSA</name>
</gene>
<accession>Q06652</accession>
<feature type="chain" id="PRO_0000066627" description="Probable phospholipid hydroperoxide glutathione peroxidase">
    <location>
        <begin position="1"/>
        <end position="167"/>
    </location>
</feature>
<feature type="active site" evidence="2">
    <location>
        <position position="41"/>
    </location>
</feature>